<reference key="1">
    <citation type="journal article" date="2001" name="Genes Dev.">
        <title>An SH2-domain containing kinase is a negative regulator of the phosphatidylinositol-3 kinase pathway.</title>
        <authorList>
            <person name="Moniakis J."/>
        </authorList>
    </citation>
    <scope>NUCLEOTIDE SEQUENCE [MRNA]</scope>
    <scope>FUNCTION</scope>
    <scope>SUBCELLULAR LOCATION</scope>
    <scope>DISRUPTION PHENOTYPE</scope>
</reference>
<reference key="2">
    <citation type="journal article" date="2005" name="Nature">
        <title>The genome of the social amoeba Dictyostelium discoideum.</title>
        <authorList>
            <person name="Eichinger L."/>
            <person name="Pachebat J.A."/>
            <person name="Gloeckner G."/>
            <person name="Rajandream M.A."/>
            <person name="Sucgang R."/>
            <person name="Berriman M."/>
            <person name="Song J."/>
            <person name="Olsen R."/>
            <person name="Szafranski K."/>
            <person name="Xu Q."/>
            <person name="Tunggal B."/>
            <person name="Kummerfeld S."/>
            <person name="Madera M."/>
            <person name="Konfortov B.A."/>
            <person name="Rivero F."/>
            <person name="Bankier A.T."/>
            <person name="Lehmann R."/>
            <person name="Hamlin N."/>
            <person name="Davies R."/>
            <person name="Gaudet P."/>
            <person name="Fey P."/>
            <person name="Pilcher K."/>
            <person name="Chen G."/>
            <person name="Saunders D."/>
            <person name="Sodergren E.J."/>
            <person name="Davis P."/>
            <person name="Kerhornou A."/>
            <person name="Nie X."/>
            <person name="Hall N."/>
            <person name="Anjard C."/>
            <person name="Hemphill L."/>
            <person name="Bason N."/>
            <person name="Farbrother P."/>
            <person name="Desany B."/>
            <person name="Just E."/>
            <person name="Morio T."/>
            <person name="Rost R."/>
            <person name="Churcher C.M."/>
            <person name="Cooper J."/>
            <person name="Haydock S."/>
            <person name="van Driessche N."/>
            <person name="Cronin A."/>
            <person name="Goodhead I."/>
            <person name="Muzny D.M."/>
            <person name="Mourier T."/>
            <person name="Pain A."/>
            <person name="Lu M."/>
            <person name="Harper D."/>
            <person name="Lindsay R."/>
            <person name="Hauser H."/>
            <person name="James K.D."/>
            <person name="Quiles M."/>
            <person name="Madan Babu M."/>
            <person name="Saito T."/>
            <person name="Buchrieser C."/>
            <person name="Wardroper A."/>
            <person name="Felder M."/>
            <person name="Thangavelu M."/>
            <person name="Johnson D."/>
            <person name="Knights A."/>
            <person name="Loulseged H."/>
            <person name="Mungall K.L."/>
            <person name="Oliver K."/>
            <person name="Price C."/>
            <person name="Quail M.A."/>
            <person name="Urushihara H."/>
            <person name="Hernandez J."/>
            <person name="Rabbinowitsch E."/>
            <person name="Steffen D."/>
            <person name="Sanders M."/>
            <person name="Ma J."/>
            <person name="Kohara Y."/>
            <person name="Sharp S."/>
            <person name="Simmonds M.N."/>
            <person name="Spiegler S."/>
            <person name="Tivey A."/>
            <person name="Sugano S."/>
            <person name="White B."/>
            <person name="Walker D."/>
            <person name="Woodward J.R."/>
            <person name="Winckler T."/>
            <person name="Tanaka Y."/>
            <person name="Shaulsky G."/>
            <person name="Schleicher M."/>
            <person name="Weinstock G.M."/>
            <person name="Rosenthal A."/>
            <person name="Cox E.C."/>
            <person name="Chisholm R.L."/>
            <person name="Gibbs R.A."/>
            <person name="Loomis W.F."/>
            <person name="Platzer M."/>
            <person name="Kay R.R."/>
            <person name="Williams J.G."/>
            <person name="Dear P.H."/>
            <person name="Noegel A.A."/>
            <person name="Barrell B.G."/>
            <person name="Kuspa A."/>
        </authorList>
    </citation>
    <scope>NUCLEOTIDE SEQUENCE [LARGE SCALE GENOMIC DNA]</scope>
    <source>
        <strain>AX4</strain>
    </source>
</reference>
<name>SHKA_DICDI</name>
<comment type="function">
    <text evidence="4">Required for proper chemotaxis and phagocytosis; proper spatiotemporal control of F-actin levels in chemotaxing cells. Negative regulator of the PI3K (phosphatidylinositol 3 kinase) pathway. Predominantly phosphorylates serines and threonines and tyrosines at a lower level.</text>
</comment>
<comment type="catalytic activity">
    <reaction>
        <text>L-seryl-[protein] + ATP = O-phospho-L-seryl-[protein] + ADP + H(+)</text>
        <dbReference type="Rhea" id="RHEA:17989"/>
        <dbReference type="Rhea" id="RHEA-COMP:9863"/>
        <dbReference type="Rhea" id="RHEA-COMP:11604"/>
        <dbReference type="ChEBI" id="CHEBI:15378"/>
        <dbReference type="ChEBI" id="CHEBI:29999"/>
        <dbReference type="ChEBI" id="CHEBI:30616"/>
        <dbReference type="ChEBI" id="CHEBI:83421"/>
        <dbReference type="ChEBI" id="CHEBI:456216"/>
        <dbReference type="EC" id="2.7.11.1"/>
    </reaction>
</comment>
<comment type="catalytic activity">
    <reaction>
        <text>L-threonyl-[protein] + ATP = O-phospho-L-threonyl-[protein] + ADP + H(+)</text>
        <dbReference type="Rhea" id="RHEA:46608"/>
        <dbReference type="Rhea" id="RHEA-COMP:11060"/>
        <dbReference type="Rhea" id="RHEA-COMP:11605"/>
        <dbReference type="ChEBI" id="CHEBI:15378"/>
        <dbReference type="ChEBI" id="CHEBI:30013"/>
        <dbReference type="ChEBI" id="CHEBI:30616"/>
        <dbReference type="ChEBI" id="CHEBI:61977"/>
        <dbReference type="ChEBI" id="CHEBI:456216"/>
        <dbReference type="EC" id="2.7.11.1"/>
    </reaction>
</comment>
<comment type="subcellular location">
    <subcellularLocation>
        <location evidence="4">Membrane</location>
    </subcellularLocation>
</comment>
<comment type="disruption phenotype">
    <text evidence="4">Cells lack polarity, move very slowly, and exhibit an elevated and temporally extended chemoattractant-mediated activation of the kinase Akt/PKB.</text>
</comment>
<comment type="similarity">
    <text evidence="5">Belongs to the protein kinase superfamily. TKL Ser/Thr protein kinase family. SH2 domain-containing protein kinase subfamily.</text>
</comment>
<dbReference type="EC" id="2.7.11.1"/>
<dbReference type="EMBL" id="AJ297966">
    <property type="protein sequence ID" value="CAC35360.1"/>
    <property type="molecule type" value="mRNA"/>
</dbReference>
<dbReference type="EMBL" id="AAFI02000052">
    <property type="protein sequence ID" value="EAL65774.1"/>
    <property type="molecule type" value="Genomic_DNA"/>
</dbReference>
<dbReference type="RefSeq" id="XP_639130.1">
    <property type="nucleotide sequence ID" value="XM_634038.1"/>
</dbReference>
<dbReference type="SMR" id="Q54RB7"/>
<dbReference type="FunCoup" id="Q54RB7">
    <property type="interactions" value="290"/>
</dbReference>
<dbReference type="STRING" id="44689.Q54RB7"/>
<dbReference type="GlyGen" id="Q54RB7">
    <property type="glycosylation" value="1 site"/>
</dbReference>
<dbReference type="PaxDb" id="44689-DDB0191149"/>
<dbReference type="EnsemblProtists" id="EAL65774">
    <property type="protein sequence ID" value="EAL65774"/>
    <property type="gene ID" value="DDB_G0283267"/>
</dbReference>
<dbReference type="GeneID" id="8624001"/>
<dbReference type="KEGG" id="ddi:DDB_G0283267"/>
<dbReference type="dictyBase" id="DDB_G0283267">
    <property type="gene designation" value="shkA"/>
</dbReference>
<dbReference type="VEuPathDB" id="AmoebaDB:DDB_G0283267"/>
<dbReference type="eggNOG" id="KOG0192">
    <property type="taxonomic scope" value="Eukaryota"/>
</dbReference>
<dbReference type="HOGENOM" id="CLU_024030_0_0_1"/>
<dbReference type="InParanoid" id="Q54RB7"/>
<dbReference type="OMA" id="AWFHGDI"/>
<dbReference type="PhylomeDB" id="Q54RB7"/>
<dbReference type="PRO" id="PR:Q54RB7"/>
<dbReference type="Proteomes" id="UP000002195">
    <property type="component" value="Chromosome 4"/>
</dbReference>
<dbReference type="GO" id="GO:0005938">
    <property type="term" value="C:cell cortex"/>
    <property type="evidence" value="ECO:0000314"/>
    <property type="project" value="dictyBase"/>
</dbReference>
<dbReference type="GO" id="GO:0005737">
    <property type="term" value="C:cytoplasm"/>
    <property type="evidence" value="ECO:0000318"/>
    <property type="project" value="GO_Central"/>
</dbReference>
<dbReference type="GO" id="GO:0016020">
    <property type="term" value="C:membrane"/>
    <property type="evidence" value="ECO:0007669"/>
    <property type="project" value="UniProtKB-SubCell"/>
</dbReference>
<dbReference type="GO" id="GO:0005524">
    <property type="term" value="F:ATP binding"/>
    <property type="evidence" value="ECO:0007669"/>
    <property type="project" value="UniProtKB-KW"/>
</dbReference>
<dbReference type="GO" id="GO:0106310">
    <property type="term" value="F:protein serine kinase activity"/>
    <property type="evidence" value="ECO:0007669"/>
    <property type="project" value="RHEA"/>
</dbReference>
<dbReference type="GO" id="GO:0004674">
    <property type="term" value="F:protein serine/threonine kinase activity"/>
    <property type="evidence" value="ECO:0000314"/>
    <property type="project" value="dictyBase"/>
</dbReference>
<dbReference type="GO" id="GO:0004713">
    <property type="term" value="F:protein tyrosine kinase activity"/>
    <property type="evidence" value="ECO:0000314"/>
    <property type="project" value="dictyBase"/>
</dbReference>
<dbReference type="GO" id="GO:0030036">
    <property type="term" value="P:actin cytoskeleton organization"/>
    <property type="evidence" value="ECO:0000315"/>
    <property type="project" value="dictyBase"/>
</dbReference>
<dbReference type="GO" id="GO:0006935">
    <property type="term" value="P:chemotaxis"/>
    <property type="evidence" value="ECO:0000315"/>
    <property type="project" value="dictyBase"/>
</dbReference>
<dbReference type="GO" id="GO:0009968">
    <property type="term" value="P:negative regulation of signal transduction"/>
    <property type="evidence" value="ECO:0000315"/>
    <property type="project" value="dictyBase"/>
</dbReference>
<dbReference type="GO" id="GO:0006909">
    <property type="term" value="P:phagocytosis"/>
    <property type="evidence" value="ECO:0000315"/>
    <property type="project" value="dictyBase"/>
</dbReference>
<dbReference type="GO" id="GO:0007165">
    <property type="term" value="P:signal transduction"/>
    <property type="evidence" value="ECO:0000318"/>
    <property type="project" value="GO_Central"/>
</dbReference>
<dbReference type="CDD" id="cd10356">
    <property type="entry name" value="SH2_ShkA_ShkC"/>
    <property type="match status" value="1"/>
</dbReference>
<dbReference type="CDD" id="cd13999">
    <property type="entry name" value="STKc_MAP3K-like"/>
    <property type="match status" value="1"/>
</dbReference>
<dbReference type="FunFam" id="1.10.510.10:FF:000476">
    <property type="entry name" value="PAS domain-containing protein tyrosine kinase family protein"/>
    <property type="match status" value="1"/>
</dbReference>
<dbReference type="FunFam" id="3.30.200.20:FF:000659">
    <property type="entry name" value="SH2-protein kinase domain containing protein"/>
    <property type="match status" value="1"/>
</dbReference>
<dbReference type="Gene3D" id="3.30.200.20">
    <property type="entry name" value="Phosphorylase Kinase, domain 1"/>
    <property type="match status" value="1"/>
</dbReference>
<dbReference type="Gene3D" id="3.30.505.10">
    <property type="entry name" value="SH2 domain"/>
    <property type="match status" value="1"/>
</dbReference>
<dbReference type="Gene3D" id="1.10.510.10">
    <property type="entry name" value="Transferase(Phosphotransferase) domain 1"/>
    <property type="match status" value="1"/>
</dbReference>
<dbReference type="InterPro" id="IPR011009">
    <property type="entry name" value="Kinase-like_dom_sf"/>
</dbReference>
<dbReference type="InterPro" id="IPR000719">
    <property type="entry name" value="Prot_kinase_dom"/>
</dbReference>
<dbReference type="InterPro" id="IPR017441">
    <property type="entry name" value="Protein_kinase_ATP_BS"/>
</dbReference>
<dbReference type="InterPro" id="IPR001245">
    <property type="entry name" value="Ser-Thr/Tyr_kinase_cat_dom"/>
</dbReference>
<dbReference type="InterPro" id="IPR008271">
    <property type="entry name" value="Ser/Thr_kinase_AS"/>
</dbReference>
<dbReference type="InterPro" id="IPR051681">
    <property type="entry name" value="Ser/Thr_Kinases-Pseudokinases"/>
</dbReference>
<dbReference type="InterPro" id="IPR000980">
    <property type="entry name" value="SH2"/>
</dbReference>
<dbReference type="InterPro" id="IPR036860">
    <property type="entry name" value="SH2_dom_sf"/>
</dbReference>
<dbReference type="InterPro" id="IPR035844">
    <property type="entry name" value="ShkA/ShkC_SH2"/>
</dbReference>
<dbReference type="PANTHER" id="PTHR44329:SF8">
    <property type="entry name" value="DUAL SPECIFICITY PROTEIN KINASE SHKA"/>
    <property type="match status" value="1"/>
</dbReference>
<dbReference type="PANTHER" id="PTHR44329">
    <property type="entry name" value="SERINE/THREONINE-PROTEIN KINASE TNNI3K-RELATED"/>
    <property type="match status" value="1"/>
</dbReference>
<dbReference type="Pfam" id="PF07714">
    <property type="entry name" value="PK_Tyr_Ser-Thr"/>
    <property type="match status" value="1"/>
</dbReference>
<dbReference type="Pfam" id="PF00017">
    <property type="entry name" value="SH2"/>
    <property type="match status" value="1"/>
</dbReference>
<dbReference type="PRINTS" id="PR00109">
    <property type="entry name" value="TYRKINASE"/>
</dbReference>
<dbReference type="SMART" id="SM00220">
    <property type="entry name" value="S_TKc"/>
    <property type="match status" value="1"/>
</dbReference>
<dbReference type="SMART" id="SM00252">
    <property type="entry name" value="SH2"/>
    <property type="match status" value="1"/>
</dbReference>
<dbReference type="SUPFAM" id="SSF56112">
    <property type="entry name" value="Protein kinase-like (PK-like)"/>
    <property type="match status" value="1"/>
</dbReference>
<dbReference type="SUPFAM" id="SSF55550">
    <property type="entry name" value="SH2 domain"/>
    <property type="match status" value="1"/>
</dbReference>
<dbReference type="PROSITE" id="PS00107">
    <property type="entry name" value="PROTEIN_KINASE_ATP"/>
    <property type="match status" value="1"/>
</dbReference>
<dbReference type="PROSITE" id="PS50011">
    <property type="entry name" value="PROTEIN_KINASE_DOM"/>
    <property type="match status" value="1"/>
</dbReference>
<dbReference type="PROSITE" id="PS00108">
    <property type="entry name" value="PROTEIN_KINASE_ST"/>
    <property type="match status" value="1"/>
</dbReference>
<dbReference type="PROSITE" id="PS50001">
    <property type="entry name" value="SH2"/>
    <property type="match status" value="1"/>
</dbReference>
<sequence length="527" mass="59447">MATQQQQQQQQQQQQQIKARKDIQIQQAQSASDILGPPEISETEITTESILGDGSFGTVYKGRCRLKDVAVKVMLKQVDQKTLTDFRKEVAIMSKIFHPNIVLFLGACTSTPGKLMICTELMKGNLESLLLDPMVKLPLITRMRMAKDAALGVLWLHSSNPVFIHRDLKTSNLLVDANLTVKVCDFGLSQIKQRGENLKDGQDGAKGTPLWMAPEVLQGRLFNEKADVYSFGLVLWQIFTRQELFPEFDNFFKFVAAICEKQLRPSIPDDCPKSLKELIQKCWDPNPEVRPSFEGIVSELEEIIIDCCIPDEYGAILWKNHFKHENEANWKDFINVFSNFVGLTNANTPSMSDLLQFSPNLNGSTIELNFKCLKSIIVSSPKGPHEEEVVLMEQFGKVLAWFGNLKEDGSQILDKIRQLMECAWFHGDISTSESENRLRQKPEGTFLVRFSTSEYGAYTISKVSKNGGISHQRIHRPQGKFQVNNSKYLSVKELITGEAQALGINTPCLGSRFLSLIYKAQLSGYIN</sequence>
<organism>
    <name type="scientific">Dictyostelium discoideum</name>
    <name type="common">Social amoeba</name>
    <dbReference type="NCBI Taxonomy" id="44689"/>
    <lineage>
        <taxon>Eukaryota</taxon>
        <taxon>Amoebozoa</taxon>
        <taxon>Evosea</taxon>
        <taxon>Eumycetozoa</taxon>
        <taxon>Dictyostelia</taxon>
        <taxon>Dictyosteliales</taxon>
        <taxon>Dictyosteliaceae</taxon>
        <taxon>Dictyostelium</taxon>
    </lineage>
</organism>
<keyword id="KW-0067">ATP-binding</keyword>
<keyword id="KW-0418">Kinase</keyword>
<keyword id="KW-0472">Membrane</keyword>
<keyword id="KW-0547">Nucleotide-binding</keyword>
<keyword id="KW-1185">Reference proteome</keyword>
<keyword id="KW-0723">Serine/threonine-protein kinase</keyword>
<keyword id="KW-0808">Transferase</keyword>
<keyword id="KW-0829">Tyrosine-protein kinase</keyword>
<feature type="chain" id="PRO_0000327808" description="Dual specificity protein kinase shkA">
    <location>
        <begin position="1"/>
        <end position="527"/>
    </location>
</feature>
<feature type="domain" description="Protein kinase" evidence="1">
    <location>
        <begin position="45"/>
        <end position="304"/>
    </location>
</feature>
<feature type="domain" description="SH2" evidence="2">
    <location>
        <begin position="424"/>
        <end position="513"/>
    </location>
</feature>
<feature type="active site" description="Proton acceptor" evidence="1 3">
    <location>
        <position position="167"/>
    </location>
</feature>
<feature type="binding site" evidence="1">
    <location>
        <begin position="51"/>
        <end position="59"/>
    </location>
    <ligand>
        <name>ATP</name>
        <dbReference type="ChEBI" id="CHEBI:30616"/>
    </ligand>
</feature>
<feature type="binding site" evidence="1">
    <location>
        <position position="72"/>
    </location>
    <ligand>
        <name>ATP</name>
        <dbReference type="ChEBI" id="CHEBI:30616"/>
    </ligand>
</feature>
<feature type="sequence conflict" description="In Ref. 1; CAC35360." evidence="5" ref="1">
    <original>R</original>
    <variation>K</variation>
    <location>
        <position position="65"/>
    </location>
</feature>
<feature type="sequence conflict" description="In Ref. 1; CAC35360." evidence="5" ref="1">
    <original>A</original>
    <variation>P</variation>
    <location>
        <position position="70"/>
    </location>
</feature>
<feature type="sequence conflict" description="In Ref. 1; CAC35360." evidence="5" ref="1">
    <original>S</original>
    <variation>F</variation>
    <location>
        <position position="515"/>
    </location>
</feature>
<proteinExistence type="evidence at transcript level"/>
<evidence type="ECO:0000255" key="1">
    <source>
        <dbReference type="PROSITE-ProRule" id="PRU00159"/>
    </source>
</evidence>
<evidence type="ECO:0000255" key="2">
    <source>
        <dbReference type="PROSITE-ProRule" id="PRU00191"/>
    </source>
</evidence>
<evidence type="ECO:0000255" key="3">
    <source>
        <dbReference type="PROSITE-ProRule" id="PRU10027"/>
    </source>
</evidence>
<evidence type="ECO:0000269" key="4">
    <source>
    </source>
</evidence>
<evidence type="ECO:0000305" key="5"/>
<protein>
    <recommendedName>
        <fullName>Dual specificity protein kinase shkA</fullName>
        <ecNumber>2.7.11.1</ecNumber>
    </recommendedName>
    <alternativeName>
        <fullName>SH2 domain-containing protein 1</fullName>
    </alternativeName>
    <alternativeName>
        <fullName>SH2 domain-containing protein A</fullName>
    </alternativeName>
</protein>
<accession>Q54RB7</accession>
<accession>Q9BI25</accession>
<gene>
    <name type="primary">shkA</name>
    <name type="synonym">shk1</name>
    <name type="ORF">DDB_G0283267</name>
</gene>